<feature type="chain" id="PRO_0000361979" description="3-hydroxyanthranilate 3,4-dioxygenase 2">
    <location>
        <begin position="1"/>
        <end position="188"/>
    </location>
</feature>
<feature type="binding site" evidence="1">
    <location>
        <position position="46"/>
    </location>
    <ligand>
        <name>O2</name>
        <dbReference type="ChEBI" id="CHEBI:15379"/>
    </ligand>
</feature>
<feature type="binding site" evidence="1">
    <location>
        <position position="50"/>
    </location>
    <ligand>
        <name>Fe cation</name>
        <dbReference type="ChEBI" id="CHEBI:24875"/>
        <note>catalytic</note>
    </ligand>
</feature>
<feature type="binding site" evidence="1">
    <location>
        <position position="70"/>
    </location>
    <ligand>
        <name>Fe cation</name>
        <dbReference type="ChEBI" id="CHEBI:24875"/>
        <note>catalytic</note>
    </ligand>
</feature>
<feature type="binding site" evidence="1">
    <location>
        <position position="70"/>
    </location>
    <ligand>
        <name>substrate</name>
    </ligand>
</feature>
<feature type="binding site" evidence="1">
    <location>
        <position position="108"/>
    </location>
    <ligand>
        <name>Fe cation</name>
        <dbReference type="ChEBI" id="CHEBI:24875"/>
        <note>catalytic</note>
    </ligand>
</feature>
<feature type="binding site" evidence="1">
    <location>
        <position position="112"/>
    </location>
    <ligand>
        <name>substrate</name>
    </ligand>
</feature>
<feature type="binding site" evidence="1">
    <location>
        <position position="122"/>
    </location>
    <ligand>
        <name>substrate</name>
    </ligand>
</feature>
<name>3HAO2_ASPFU</name>
<evidence type="ECO:0000255" key="1">
    <source>
        <dbReference type="HAMAP-Rule" id="MF_03019"/>
    </source>
</evidence>
<evidence type="ECO:0000305" key="2"/>
<accession>Q4WZC3</accession>
<protein>
    <recommendedName>
        <fullName evidence="1">3-hydroxyanthranilate 3,4-dioxygenase 2</fullName>
        <ecNumber evidence="1">1.13.11.6</ecNumber>
    </recommendedName>
    <alternativeName>
        <fullName evidence="1">3-hydroxyanthranilate oxygenase 2</fullName>
        <shortName evidence="1">3-HAO-2</shortName>
    </alternativeName>
    <alternativeName>
        <fullName evidence="1">3-hydroxyanthranilic acid dioxygenase 2</fullName>
        <shortName evidence="1">HAD-2</shortName>
    </alternativeName>
    <alternativeName>
        <fullName evidence="1">Biosynthesis of nicotinic acid protein 1-2</fullName>
    </alternativeName>
</protein>
<sequence>MATLNPLSWVTWLAENEDKLRPPVNNYCLYQGNDFILMAVGGPNERNDYHVNETEVRLQWHQPSETNEQEWFYQVQGDMLLRVIENDTFRDIPIKEGEMFLLPGNTPHNPVRYKDTIGLVMERQRPAESRDRLRWYCTKGNHCSPTIIREEVFHCADLGSQLKPIIERWQQDEESRRCGECGCIADPK</sequence>
<reference key="1">
    <citation type="journal article" date="2005" name="Nature">
        <title>Genomic sequence of the pathogenic and allergenic filamentous fungus Aspergillus fumigatus.</title>
        <authorList>
            <person name="Nierman W.C."/>
            <person name="Pain A."/>
            <person name="Anderson M.J."/>
            <person name="Wortman J.R."/>
            <person name="Kim H.S."/>
            <person name="Arroyo J."/>
            <person name="Berriman M."/>
            <person name="Abe K."/>
            <person name="Archer D.B."/>
            <person name="Bermejo C."/>
            <person name="Bennett J.W."/>
            <person name="Bowyer P."/>
            <person name="Chen D."/>
            <person name="Collins M."/>
            <person name="Coulsen R."/>
            <person name="Davies R."/>
            <person name="Dyer P.S."/>
            <person name="Farman M.L."/>
            <person name="Fedorova N."/>
            <person name="Fedorova N.D."/>
            <person name="Feldblyum T.V."/>
            <person name="Fischer R."/>
            <person name="Fosker N."/>
            <person name="Fraser A."/>
            <person name="Garcia J.L."/>
            <person name="Garcia M.J."/>
            <person name="Goble A."/>
            <person name="Goldman G.H."/>
            <person name="Gomi K."/>
            <person name="Griffith-Jones S."/>
            <person name="Gwilliam R."/>
            <person name="Haas B.J."/>
            <person name="Haas H."/>
            <person name="Harris D.E."/>
            <person name="Horiuchi H."/>
            <person name="Huang J."/>
            <person name="Humphray S."/>
            <person name="Jimenez J."/>
            <person name="Keller N."/>
            <person name="Khouri H."/>
            <person name="Kitamoto K."/>
            <person name="Kobayashi T."/>
            <person name="Konzack S."/>
            <person name="Kulkarni R."/>
            <person name="Kumagai T."/>
            <person name="Lafton A."/>
            <person name="Latge J.-P."/>
            <person name="Li W."/>
            <person name="Lord A."/>
            <person name="Lu C."/>
            <person name="Majoros W.H."/>
            <person name="May G.S."/>
            <person name="Miller B.L."/>
            <person name="Mohamoud Y."/>
            <person name="Molina M."/>
            <person name="Monod M."/>
            <person name="Mouyna I."/>
            <person name="Mulligan S."/>
            <person name="Murphy L.D."/>
            <person name="O'Neil S."/>
            <person name="Paulsen I."/>
            <person name="Penalva M.A."/>
            <person name="Pertea M."/>
            <person name="Price C."/>
            <person name="Pritchard B.L."/>
            <person name="Quail M.A."/>
            <person name="Rabbinowitsch E."/>
            <person name="Rawlins N."/>
            <person name="Rajandream M.A."/>
            <person name="Reichard U."/>
            <person name="Renauld H."/>
            <person name="Robson G.D."/>
            <person name="Rodriguez de Cordoba S."/>
            <person name="Rodriguez-Pena J.M."/>
            <person name="Ronning C.M."/>
            <person name="Rutter S."/>
            <person name="Salzberg S.L."/>
            <person name="Sanchez M."/>
            <person name="Sanchez-Ferrero J.C."/>
            <person name="Saunders D."/>
            <person name="Seeger K."/>
            <person name="Squares R."/>
            <person name="Squares S."/>
            <person name="Takeuchi M."/>
            <person name="Tekaia F."/>
            <person name="Turner G."/>
            <person name="Vazquez de Aldana C.R."/>
            <person name="Weidman J."/>
            <person name="White O."/>
            <person name="Woodward J.R."/>
            <person name="Yu J.-H."/>
            <person name="Fraser C.M."/>
            <person name="Galagan J.E."/>
            <person name="Asai K."/>
            <person name="Machida M."/>
            <person name="Hall N."/>
            <person name="Barrell B.G."/>
            <person name="Denning D.W."/>
        </authorList>
    </citation>
    <scope>NUCLEOTIDE SEQUENCE [LARGE SCALE GENOMIC DNA]</scope>
    <source>
        <strain>ATCC MYA-4609 / CBS 101355 / FGSC A1100 / Af293</strain>
    </source>
</reference>
<proteinExistence type="inferred from homology"/>
<dbReference type="EC" id="1.13.11.6" evidence="1"/>
<dbReference type="EMBL" id="AAHF01000001">
    <property type="protein sequence ID" value="EAL94042.1"/>
    <property type="status" value="ALT_SEQ"/>
    <property type="molecule type" value="Genomic_DNA"/>
</dbReference>
<dbReference type="RefSeq" id="XP_756080.1">
    <property type="nucleotide sequence ID" value="XM_750987.1"/>
</dbReference>
<dbReference type="SMR" id="Q4WZC3"/>
<dbReference type="STRING" id="330879.Q4WZC3"/>
<dbReference type="GeneID" id="3513434"/>
<dbReference type="KEGG" id="afm:AFUA_2G17450"/>
<dbReference type="eggNOG" id="KOG3995">
    <property type="taxonomic scope" value="Eukaryota"/>
</dbReference>
<dbReference type="HOGENOM" id="CLU_095765_0_0_1"/>
<dbReference type="InParanoid" id="Q4WZC3"/>
<dbReference type="OrthoDB" id="204928at2759"/>
<dbReference type="UniPathway" id="UPA00253">
    <property type="reaction ID" value="UER00330"/>
</dbReference>
<dbReference type="Proteomes" id="UP000002530">
    <property type="component" value="Chromosome 2"/>
</dbReference>
<dbReference type="GO" id="GO:0005737">
    <property type="term" value="C:cytoplasm"/>
    <property type="evidence" value="ECO:0000318"/>
    <property type="project" value="GO_Central"/>
</dbReference>
<dbReference type="GO" id="GO:0000334">
    <property type="term" value="F:3-hydroxyanthranilate 3,4-dioxygenase activity"/>
    <property type="evidence" value="ECO:0000318"/>
    <property type="project" value="GO_Central"/>
</dbReference>
<dbReference type="GO" id="GO:0008198">
    <property type="term" value="F:ferrous iron binding"/>
    <property type="evidence" value="ECO:0007669"/>
    <property type="project" value="UniProtKB-UniRule"/>
</dbReference>
<dbReference type="GO" id="GO:0034354">
    <property type="term" value="P:'de novo' NAD biosynthetic process from L-tryptophan"/>
    <property type="evidence" value="ECO:0000318"/>
    <property type="project" value="GO_Central"/>
</dbReference>
<dbReference type="GO" id="GO:0043420">
    <property type="term" value="P:anthranilate metabolic process"/>
    <property type="evidence" value="ECO:0007669"/>
    <property type="project" value="UniProtKB-UniRule"/>
</dbReference>
<dbReference type="GO" id="GO:0006569">
    <property type="term" value="P:L-tryptophan catabolic process"/>
    <property type="evidence" value="ECO:0007669"/>
    <property type="project" value="UniProtKB-UniRule"/>
</dbReference>
<dbReference type="GO" id="GO:0019805">
    <property type="term" value="P:quinolinate biosynthetic process"/>
    <property type="evidence" value="ECO:0007669"/>
    <property type="project" value="UniProtKB-UniRule"/>
</dbReference>
<dbReference type="GO" id="GO:0046874">
    <property type="term" value="P:quinolinate metabolic process"/>
    <property type="evidence" value="ECO:0000318"/>
    <property type="project" value="GO_Central"/>
</dbReference>
<dbReference type="CDD" id="cd06123">
    <property type="entry name" value="cupin_HAO"/>
    <property type="match status" value="1"/>
</dbReference>
<dbReference type="FunFam" id="2.60.120.10:FF:000131">
    <property type="entry name" value="3-hydroxyanthranilate 3,4-dioxygenase"/>
    <property type="match status" value="1"/>
</dbReference>
<dbReference type="Gene3D" id="2.60.120.10">
    <property type="entry name" value="Jelly Rolls"/>
    <property type="match status" value="1"/>
</dbReference>
<dbReference type="HAMAP" id="MF_00825">
    <property type="entry name" value="3_HAO"/>
    <property type="match status" value="1"/>
</dbReference>
<dbReference type="InterPro" id="IPR010329">
    <property type="entry name" value="3hydroanth_dOase"/>
</dbReference>
<dbReference type="InterPro" id="IPR014710">
    <property type="entry name" value="RmlC-like_jellyroll"/>
</dbReference>
<dbReference type="InterPro" id="IPR011051">
    <property type="entry name" value="RmlC_Cupin_sf"/>
</dbReference>
<dbReference type="NCBIfam" id="TIGR03037">
    <property type="entry name" value="anthran_nbaC"/>
    <property type="match status" value="1"/>
</dbReference>
<dbReference type="PANTHER" id="PTHR15497">
    <property type="entry name" value="3-HYDROXYANTHRANILATE 3,4-DIOXYGENASE"/>
    <property type="match status" value="1"/>
</dbReference>
<dbReference type="PANTHER" id="PTHR15497:SF3">
    <property type="entry name" value="3-HYDROXYANTHRANILATE 3,4-DIOXYGENASE 2"/>
    <property type="match status" value="1"/>
</dbReference>
<dbReference type="Pfam" id="PF06052">
    <property type="entry name" value="3-HAO"/>
    <property type="match status" value="1"/>
</dbReference>
<dbReference type="SUPFAM" id="SSF51182">
    <property type="entry name" value="RmlC-like cupins"/>
    <property type="match status" value="1"/>
</dbReference>
<keyword id="KW-0963">Cytoplasm</keyword>
<keyword id="KW-0223">Dioxygenase</keyword>
<keyword id="KW-0408">Iron</keyword>
<keyword id="KW-0479">Metal-binding</keyword>
<keyword id="KW-0560">Oxidoreductase</keyword>
<keyword id="KW-0662">Pyridine nucleotide biosynthesis</keyword>
<keyword id="KW-1185">Reference proteome</keyword>
<gene>
    <name type="primary">bna1-2</name>
    <name type="ORF">AFUA_2G17450</name>
</gene>
<organism>
    <name type="scientific">Aspergillus fumigatus (strain ATCC MYA-4609 / CBS 101355 / FGSC A1100 / Af293)</name>
    <name type="common">Neosartorya fumigata</name>
    <dbReference type="NCBI Taxonomy" id="330879"/>
    <lineage>
        <taxon>Eukaryota</taxon>
        <taxon>Fungi</taxon>
        <taxon>Dikarya</taxon>
        <taxon>Ascomycota</taxon>
        <taxon>Pezizomycotina</taxon>
        <taxon>Eurotiomycetes</taxon>
        <taxon>Eurotiomycetidae</taxon>
        <taxon>Eurotiales</taxon>
        <taxon>Aspergillaceae</taxon>
        <taxon>Aspergillus</taxon>
        <taxon>Aspergillus subgen. Fumigati</taxon>
    </lineage>
</organism>
<comment type="function">
    <text evidence="1">Catalyzes the oxidative ring opening of 3-hydroxyanthranilate to 2-amino-3-carboxymuconate semialdehyde, which spontaneously cyclizes to quinolinate.</text>
</comment>
<comment type="catalytic activity">
    <reaction evidence="1">
        <text>3-hydroxyanthranilate + O2 = (2Z,4Z)-2-amino-3-carboxymuconate 6-semialdehyde</text>
        <dbReference type="Rhea" id="RHEA:17953"/>
        <dbReference type="ChEBI" id="CHEBI:15379"/>
        <dbReference type="ChEBI" id="CHEBI:36559"/>
        <dbReference type="ChEBI" id="CHEBI:77612"/>
        <dbReference type="EC" id="1.13.11.6"/>
    </reaction>
</comment>
<comment type="cofactor">
    <cofactor evidence="1">
        <name>Fe(2+)</name>
        <dbReference type="ChEBI" id="CHEBI:29033"/>
    </cofactor>
</comment>
<comment type="pathway">
    <text evidence="1">Cofactor biosynthesis; NAD(+) biosynthesis; quinolinate from L-kynurenine: step 3/3.</text>
</comment>
<comment type="subcellular location">
    <subcellularLocation>
        <location evidence="1">Cytoplasm</location>
    </subcellularLocation>
</comment>
<comment type="similarity">
    <text evidence="1">Belongs to the 3-HAO family.</text>
</comment>
<comment type="sequence caution" evidence="2">
    <conflict type="erroneous gene model prediction">
        <sequence resource="EMBL-CDS" id="EAL94042"/>
    </conflict>
</comment>
<comment type="sequence caution" evidence="2">
    <conflict type="erroneous initiation">
        <sequence resource="EMBL-CDS" id="EAL94042"/>
    </conflict>
    <text>Extended N-terminus.</text>
</comment>